<accession>Q3KJD0</accession>
<sequence length="92" mass="10136">MGIFDWKHWIVILVVVVLVFGTKKLKNLGTDVGESIKGFRKAMNDDEKPADPTVTPAQPVPPVQPQATAQANPPHTIDVQAQKVEEPIRKDV</sequence>
<protein>
    <recommendedName>
        <fullName evidence="1">Sec-independent protein translocase protein TatA</fullName>
    </recommendedName>
</protein>
<gene>
    <name evidence="1" type="primary">tatA</name>
    <name type="ordered locus">Pfl01_0382</name>
</gene>
<reference key="1">
    <citation type="journal article" date="2009" name="Genome Biol.">
        <title>Genomic and genetic analyses of diversity and plant interactions of Pseudomonas fluorescens.</title>
        <authorList>
            <person name="Silby M.W."/>
            <person name="Cerdeno-Tarraga A.M."/>
            <person name="Vernikos G.S."/>
            <person name="Giddens S.R."/>
            <person name="Jackson R.W."/>
            <person name="Preston G.M."/>
            <person name="Zhang X.-X."/>
            <person name="Moon C.D."/>
            <person name="Gehrig S.M."/>
            <person name="Godfrey S.A.C."/>
            <person name="Knight C.G."/>
            <person name="Malone J.G."/>
            <person name="Robinson Z."/>
            <person name="Spiers A.J."/>
            <person name="Harris S."/>
            <person name="Challis G.L."/>
            <person name="Yaxley A.M."/>
            <person name="Harris D."/>
            <person name="Seeger K."/>
            <person name="Murphy L."/>
            <person name="Rutter S."/>
            <person name="Squares R."/>
            <person name="Quail M.A."/>
            <person name="Saunders E."/>
            <person name="Mavromatis K."/>
            <person name="Brettin T.S."/>
            <person name="Bentley S.D."/>
            <person name="Hothersall J."/>
            <person name="Stephens E."/>
            <person name="Thomas C.M."/>
            <person name="Parkhill J."/>
            <person name="Levy S.B."/>
            <person name="Rainey P.B."/>
            <person name="Thomson N.R."/>
        </authorList>
    </citation>
    <scope>NUCLEOTIDE SEQUENCE [LARGE SCALE GENOMIC DNA]</scope>
    <source>
        <strain>Pf0-1</strain>
    </source>
</reference>
<organism>
    <name type="scientific">Pseudomonas fluorescens (strain Pf0-1)</name>
    <dbReference type="NCBI Taxonomy" id="205922"/>
    <lineage>
        <taxon>Bacteria</taxon>
        <taxon>Pseudomonadati</taxon>
        <taxon>Pseudomonadota</taxon>
        <taxon>Gammaproteobacteria</taxon>
        <taxon>Pseudomonadales</taxon>
        <taxon>Pseudomonadaceae</taxon>
        <taxon>Pseudomonas</taxon>
    </lineage>
</organism>
<evidence type="ECO:0000255" key="1">
    <source>
        <dbReference type="HAMAP-Rule" id="MF_00236"/>
    </source>
</evidence>
<evidence type="ECO:0000256" key="2">
    <source>
        <dbReference type="SAM" id="MobiDB-lite"/>
    </source>
</evidence>
<dbReference type="EMBL" id="CP000094">
    <property type="protein sequence ID" value="ABA72126.1"/>
    <property type="molecule type" value="Genomic_DNA"/>
</dbReference>
<dbReference type="RefSeq" id="WP_007952423.1">
    <property type="nucleotide sequence ID" value="NC_007492.2"/>
</dbReference>
<dbReference type="SMR" id="Q3KJD0"/>
<dbReference type="KEGG" id="pfo:Pfl01_0382"/>
<dbReference type="eggNOG" id="COG1826">
    <property type="taxonomic scope" value="Bacteria"/>
</dbReference>
<dbReference type="HOGENOM" id="CLU_086034_5_1_6"/>
<dbReference type="Proteomes" id="UP000002704">
    <property type="component" value="Chromosome"/>
</dbReference>
<dbReference type="GO" id="GO:0033281">
    <property type="term" value="C:TAT protein transport complex"/>
    <property type="evidence" value="ECO:0007669"/>
    <property type="project" value="UniProtKB-UniRule"/>
</dbReference>
<dbReference type="GO" id="GO:0008320">
    <property type="term" value="F:protein transmembrane transporter activity"/>
    <property type="evidence" value="ECO:0007669"/>
    <property type="project" value="UniProtKB-UniRule"/>
</dbReference>
<dbReference type="GO" id="GO:0043953">
    <property type="term" value="P:protein transport by the Tat complex"/>
    <property type="evidence" value="ECO:0007669"/>
    <property type="project" value="UniProtKB-UniRule"/>
</dbReference>
<dbReference type="FunFam" id="1.20.5.3310:FF:000001">
    <property type="entry name" value="Probable Sec-independent protein translocase protein TatE"/>
    <property type="match status" value="1"/>
</dbReference>
<dbReference type="Gene3D" id="1.20.5.3310">
    <property type="match status" value="1"/>
</dbReference>
<dbReference type="HAMAP" id="MF_00236">
    <property type="entry name" value="TatA_E"/>
    <property type="match status" value="1"/>
</dbReference>
<dbReference type="InterPro" id="IPR003369">
    <property type="entry name" value="TatA/B/E"/>
</dbReference>
<dbReference type="InterPro" id="IPR006312">
    <property type="entry name" value="TatA/E"/>
</dbReference>
<dbReference type="NCBIfam" id="NF001681">
    <property type="entry name" value="PRK00442.1"/>
    <property type="match status" value="1"/>
</dbReference>
<dbReference type="NCBIfam" id="TIGR01411">
    <property type="entry name" value="tatAE"/>
    <property type="match status" value="1"/>
</dbReference>
<dbReference type="PANTHER" id="PTHR42982">
    <property type="entry name" value="SEC-INDEPENDENT PROTEIN TRANSLOCASE PROTEIN TATA"/>
    <property type="match status" value="1"/>
</dbReference>
<dbReference type="PANTHER" id="PTHR42982:SF1">
    <property type="entry name" value="SEC-INDEPENDENT PROTEIN TRANSLOCASE PROTEIN TATA"/>
    <property type="match status" value="1"/>
</dbReference>
<dbReference type="Pfam" id="PF02416">
    <property type="entry name" value="TatA_B_E"/>
    <property type="match status" value="1"/>
</dbReference>
<keyword id="KW-0997">Cell inner membrane</keyword>
<keyword id="KW-1003">Cell membrane</keyword>
<keyword id="KW-0472">Membrane</keyword>
<keyword id="KW-0653">Protein transport</keyword>
<keyword id="KW-0811">Translocation</keyword>
<keyword id="KW-0812">Transmembrane</keyword>
<keyword id="KW-1133">Transmembrane helix</keyword>
<keyword id="KW-0813">Transport</keyword>
<name>TATA_PSEPF</name>
<comment type="function">
    <text evidence="1">Part of the twin-arginine translocation (Tat) system that transports large folded proteins containing a characteristic twin-arginine motif in their signal peptide across membranes. TatA could form the protein-conducting channel of the Tat system.</text>
</comment>
<comment type="subunit">
    <text evidence="1">The Tat system comprises two distinct complexes: a TatABC complex, containing multiple copies of TatA, TatB and TatC subunits, and a separate TatA complex, containing only TatA subunits. Substrates initially bind to the TatABC complex, which probably triggers association of the separate TatA complex to form the active translocon.</text>
</comment>
<comment type="subcellular location">
    <subcellularLocation>
        <location evidence="1">Cell inner membrane</location>
        <topology evidence="1">Single-pass membrane protein</topology>
    </subcellularLocation>
</comment>
<comment type="similarity">
    <text evidence="1">Belongs to the TatA/E family.</text>
</comment>
<feature type="chain" id="PRO_1000044423" description="Sec-independent protein translocase protein TatA">
    <location>
        <begin position="1"/>
        <end position="92"/>
    </location>
</feature>
<feature type="transmembrane region" description="Helical" evidence="1">
    <location>
        <begin position="1"/>
        <end position="21"/>
    </location>
</feature>
<feature type="region of interest" description="Disordered" evidence="2">
    <location>
        <begin position="43"/>
        <end position="92"/>
    </location>
</feature>
<feature type="compositionally biased region" description="Low complexity" evidence="2">
    <location>
        <begin position="65"/>
        <end position="74"/>
    </location>
</feature>
<feature type="compositionally biased region" description="Basic and acidic residues" evidence="2">
    <location>
        <begin position="83"/>
        <end position="92"/>
    </location>
</feature>
<proteinExistence type="inferred from homology"/>